<protein>
    <recommendedName>
        <fullName evidence="4 5">Heavy metal-associated isoprenylated plant protein 31</fullName>
        <shortName evidence="4 5">AtHIP31</shortName>
    </recommendedName>
</protein>
<feature type="chain" id="PRO_0000437839" description="Heavy metal-associated isoprenylated plant protein 31">
    <location>
        <begin position="1"/>
        <end position="137"/>
    </location>
</feature>
<feature type="propeptide" id="PRO_0000437840" description="Removed in mature form" evidence="6">
    <location>
        <begin position="138"/>
        <end position="140"/>
    </location>
</feature>
<feature type="domain" description="HMA" evidence="3">
    <location>
        <begin position="3"/>
        <end position="67"/>
    </location>
</feature>
<feature type="binding site" evidence="3">
    <location>
        <position position="14"/>
    </location>
    <ligand>
        <name>a metal cation</name>
        <dbReference type="ChEBI" id="CHEBI:25213"/>
    </ligand>
</feature>
<feature type="binding site" evidence="3">
    <location>
        <position position="17"/>
    </location>
    <ligand>
        <name>a metal cation</name>
        <dbReference type="ChEBI" id="CHEBI:25213"/>
    </ligand>
</feature>
<feature type="modified residue" description="Cysteine methyl ester" evidence="2">
    <location>
        <position position="137"/>
    </location>
</feature>
<feature type="lipid moiety-binding region" description="S-farnesyl cysteine" evidence="2">
    <location>
        <position position="137"/>
    </location>
</feature>
<feature type="sequence conflict" description="In Ref. 4; AAM63416." evidence="6" ref="4">
    <original>D</original>
    <variation>V</variation>
    <location>
        <position position="114"/>
    </location>
</feature>
<comment type="function">
    <text evidence="1">Heavy-metal-binding protein.</text>
</comment>
<comment type="similarity">
    <text evidence="6">Belongs to the HIPP family.</text>
</comment>
<comment type="sequence caution" evidence="6">
    <conflict type="erroneous gene model prediction">
        <sequence resource="EMBL-CDS" id="CAB62013"/>
    </conflict>
</comment>
<organism evidence="8">
    <name type="scientific">Arabidopsis thaliana</name>
    <name type="common">Mouse-ear cress</name>
    <dbReference type="NCBI Taxonomy" id="3702"/>
    <lineage>
        <taxon>Eukaryota</taxon>
        <taxon>Viridiplantae</taxon>
        <taxon>Streptophyta</taxon>
        <taxon>Embryophyta</taxon>
        <taxon>Tracheophyta</taxon>
        <taxon>Spermatophyta</taxon>
        <taxon>Magnoliopsida</taxon>
        <taxon>eudicotyledons</taxon>
        <taxon>Gunneridae</taxon>
        <taxon>Pentapetalae</taxon>
        <taxon>rosids</taxon>
        <taxon>malvids</taxon>
        <taxon>Brassicales</taxon>
        <taxon>Brassicaceae</taxon>
        <taxon>Camelineae</taxon>
        <taxon>Arabidopsis</taxon>
    </lineage>
</organism>
<name>HIP31_ARATH</name>
<keyword id="KW-0449">Lipoprotein</keyword>
<keyword id="KW-0479">Metal-binding</keyword>
<keyword id="KW-0488">Methylation</keyword>
<keyword id="KW-0636">Prenylation</keyword>
<keyword id="KW-1185">Reference proteome</keyword>
<reference key="1">
    <citation type="journal article" date="2000" name="Nature">
        <title>Sequence and analysis of chromosome 3 of the plant Arabidopsis thaliana.</title>
        <authorList>
            <person name="Salanoubat M."/>
            <person name="Lemcke K."/>
            <person name="Rieger M."/>
            <person name="Ansorge W."/>
            <person name="Unseld M."/>
            <person name="Fartmann B."/>
            <person name="Valle G."/>
            <person name="Bloecker H."/>
            <person name="Perez-Alonso M."/>
            <person name="Obermaier B."/>
            <person name="Delseny M."/>
            <person name="Boutry M."/>
            <person name="Grivell L.A."/>
            <person name="Mache R."/>
            <person name="Puigdomenech P."/>
            <person name="De Simone V."/>
            <person name="Choisne N."/>
            <person name="Artiguenave F."/>
            <person name="Robert C."/>
            <person name="Brottier P."/>
            <person name="Wincker P."/>
            <person name="Cattolico L."/>
            <person name="Weissenbach J."/>
            <person name="Saurin W."/>
            <person name="Quetier F."/>
            <person name="Schaefer M."/>
            <person name="Mueller-Auer S."/>
            <person name="Gabel C."/>
            <person name="Fuchs M."/>
            <person name="Benes V."/>
            <person name="Wurmbach E."/>
            <person name="Drzonek H."/>
            <person name="Erfle H."/>
            <person name="Jordan N."/>
            <person name="Bangert S."/>
            <person name="Wiedelmann R."/>
            <person name="Kranz H."/>
            <person name="Voss H."/>
            <person name="Holland R."/>
            <person name="Brandt P."/>
            <person name="Nyakatura G."/>
            <person name="Vezzi A."/>
            <person name="D'Angelo M."/>
            <person name="Pallavicini A."/>
            <person name="Toppo S."/>
            <person name="Simionati B."/>
            <person name="Conrad A."/>
            <person name="Hornischer K."/>
            <person name="Kauer G."/>
            <person name="Loehnert T.-H."/>
            <person name="Nordsiek G."/>
            <person name="Reichelt J."/>
            <person name="Scharfe M."/>
            <person name="Schoen O."/>
            <person name="Bargues M."/>
            <person name="Terol J."/>
            <person name="Climent J."/>
            <person name="Navarro P."/>
            <person name="Collado C."/>
            <person name="Perez-Perez A."/>
            <person name="Ottenwaelder B."/>
            <person name="Duchemin D."/>
            <person name="Cooke R."/>
            <person name="Laudie M."/>
            <person name="Berger-Llauro C."/>
            <person name="Purnelle B."/>
            <person name="Masuy D."/>
            <person name="de Haan M."/>
            <person name="Maarse A.C."/>
            <person name="Alcaraz J.-P."/>
            <person name="Cottet A."/>
            <person name="Casacuberta E."/>
            <person name="Monfort A."/>
            <person name="Argiriou A."/>
            <person name="Flores M."/>
            <person name="Liguori R."/>
            <person name="Vitale D."/>
            <person name="Mannhaupt G."/>
            <person name="Haase D."/>
            <person name="Schoof H."/>
            <person name="Rudd S."/>
            <person name="Zaccaria P."/>
            <person name="Mewes H.-W."/>
            <person name="Mayer K.F.X."/>
            <person name="Kaul S."/>
            <person name="Town C.D."/>
            <person name="Koo H.L."/>
            <person name="Tallon L.J."/>
            <person name="Jenkins J."/>
            <person name="Rooney T."/>
            <person name="Rizzo M."/>
            <person name="Walts A."/>
            <person name="Utterback T."/>
            <person name="Fujii C.Y."/>
            <person name="Shea T.P."/>
            <person name="Creasy T.H."/>
            <person name="Haas B."/>
            <person name="Maiti R."/>
            <person name="Wu D."/>
            <person name="Peterson J."/>
            <person name="Van Aken S."/>
            <person name="Pai G."/>
            <person name="Militscher J."/>
            <person name="Sellers P."/>
            <person name="Gill J.E."/>
            <person name="Feldblyum T.V."/>
            <person name="Preuss D."/>
            <person name="Lin X."/>
            <person name="Nierman W.C."/>
            <person name="Salzberg S.L."/>
            <person name="White O."/>
            <person name="Venter J.C."/>
            <person name="Fraser C.M."/>
            <person name="Kaneko T."/>
            <person name="Nakamura Y."/>
            <person name="Sato S."/>
            <person name="Kato T."/>
            <person name="Asamizu E."/>
            <person name="Sasamoto S."/>
            <person name="Kimura T."/>
            <person name="Idesawa K."/>
            <person name="Kawashima K."/>
            <person name="Kishida Y."/>
            <person name="Kiyokawa C."/>
            <person name="Kohara M."/>
            <person name="Matsumoto M."/>
            <person name="Matsuno A."/>
            <person name="Muraki A."/>
            <person name="Nakayama S."/>
            <person name="Nakazaki N."/>
            <person name="Shinpo S."/>
            <person name="Takeuchi C."/>
            <person name="Wada T."/>
            <person name="Watanabe A."/>
            <person name="Yamada M."/>
            <person name="Yasuda M."/>
            <person name="Tabata S."/>
        </authorList>
    </citation>
    <scope>NUCLEOTIDE SEQUENCE [LARGE SCALE GENOMIC DNA]</scope>
    <source>
        <strain>cv. Columbia</strain>
    </source>
</reference>
<reference key="2">
    <citation type="journal article" date="2017" name="Plant J.">
        <title>Araport11: a complete reannotation of the Arabidopsis thaliana reference genome.</title>
        <authorList>
            <person name="Cheng C.Y."/>
            <person name="Krishnakumar V."/>
            <person name="Chan A.P."/>
            <person name="Thibaud-Nissen F."/>
            <person name="Schobel S."/>
            <person name="Town C.D."/>
        </authorList>
    </citation>
    <scope>GENOME REANNOTATION</scope>
    <source>
        <strain>cv. Columbia</strain>
    </source>
</reference>
<reference key="3">
    <citation type="journal article" date="2003" name="Science">
        <title>Empirical analysis of transcriptional activity in the Arabidopsis genome.</title>
        <authorList>
            <person name="Yamada K."/>
            <person name="Lim J."/>
            <person name="Dale J.M."/>
            <person name="Chen H."/>
            <person name="Shinn P."/>
            <person name="Palm C.J."/>
            <person name="Southwick A.M."/>
            <person name="Wu H.C."/>
            <person name="Kim C.J."/>
            <person name="Nguyen M."/>
            <person name="Pham P.K."/>
            <person name="Cheuk R.F."/>
            <person name="Karlin-Newmann G."/>
            <person name="Liu S.X."/>
            <person name="Lam B."/>
            <person name="Sakano H."/>
            <person name="Wu T."/>
            <person name="Yu G."/>
            <person name="Miranda M."/>
            <person name="Quach H.L."/>
            <person name="Tripp M."/>
            <person name="Chang C.H."/>
            <person name="Lee J.M."/>
            <person name="Toriumi M.J."/>
            <person name="Chan M.M."/>
            <person name="Tang C.C."/>
            <person name="Onodera C.S."/>
            <person name="Deng J.M."/>
            <person name="Akiyama K."/>
            <person name="Ansari Y."/>
            <person name="Arakawa T."/>
            <person name="Banh J."/>
            <person name="Banno F."/>
            <person name="Bowser L."/>
            <person name="Brooks S.Y."/>
            <person name="Carninci P."/>
            <person name="Chao Q."/>
            <person name="Choy N."/>
            <person name="Enju A."/>
            <person name="Goldsmith A.D."/>
            <person name="Gurjal M."/>
            <person name="Hansen N.F."/>
            <person name="Hayashizaki Y."/>
            <person name="Johnson-Hopson C."/>
            <person name="Hsuan V.W."/>
            <person name="Iida K."/>
            <person name="Karnes M."/>
            <person name="Khan S."/>
            <person name="Koesema E."/>
            <person name="Ishida J."/>
            <person name="Jiang P.X."/>
            <person name="Jones T."/>
            <person name="Kawai J."/>
            <person name="Kamiya A."/>
            <person name="Meyers C."/>
            <person name="Nakajima M."/>
            <person name="Narusaka M."/>
            <person name="Seki M."/>
            <person name="Sakurai T."/>
            <person name="Satou M."/>
            <person name="Tamse R."/>
            <person name="Vaysberg M."/>
            <person name="Wallender E.K."/>
            <person name="Wong C."/>
            <person name="Yamamura Y."/>
            <person name="Yuan S."/>
            <person name="Shinozaki K."/>
            <person name="Davis R.W."/>
            <person name="Theologis A."/>
            <person name="Ecker J.R."/>
        </authorList>
    </citation>
    <scope>NUCLEOTIDE SEQUENCE [LARGE SCALE MRNA]</scope>
    <source>
        <strain>cv. Columbia</strain>
    </source>
</reference>
<reference key="4">
    <citation type="submission" date="2002-03" db="EMBL/GenBank/DDBJ databases">
        <title>Full-length cDNA from Arabidopsis thaliana.</title>
        <authorList>
            <person name="Brover V.V."/>
            <person name="Troukhan M.E."/>
            <person name="Alexandrov N.A."/>
            <person name="Lu Y.-P."/>
            <person name="Flavell R.B."/>
            <person name="Feldmann K.A."/>
        </authorList>
    </citation>
    <scope>NUCLEOTIDE SEQUENCE [LARGE SCALE MRNA]</scope>
</reference>
<reference key="5">
    <citation type="journal article" date="2010" name="Metallomics">
        <title>Metallochaperone-like genes in Arabidopsis thaliana.</title>
        <authorList>
            <person name="Tehseen M."/>
            <person name="Cairns N."/>
            <person name="Sherson S."/>
            <person name="Cobbett C.S."/>
        </authorList>
    </citation>
    <scope>GENE FAMILY</scope>
    <scope>NOMENCLATURE</scope>
</reference>
<reference key="6">
    <citation type="journal article" date="2013" name="FEBS J.">
        <title>Heavy metal-associated isoprenylated plant protein (HIPP): characterization of a family of proteins exclusive to plants.</title>
        <authorList>
            <person name="de Abreu-Neto J.B."/>
            <person name="Turchetto-Zolet A.C."/>
            <person name="de Oliveira L.F."/>
            <person name="Zanettini M.H."/>
            <person name="Margis-Pinheiro M."/>
        </authorList>
    </citation>
    <scope>GENE FAMILY</scope>
    <scope>NOMENCLATURE</scope>
</reference>
<accession>Q84K70</accession>
<accession>Q8LCT5</accession>
<accession>Q9SMT5</accession>
<evidence type="ECO:0000250" key="1">
    <source>
        <dbReference type="UniProtKB" id="Q9LZF1"/>
    </source>
</evidence>
<evidence type="ECO:0000250" key="2">
    <source>
        <dbReference type="UniProtKB" id="Q9SZN7"/>
    </source>
</evidence>
<evidence type="ECO:0000255" key="3">
    <source>
        <dbReference type="PROSITE-ProRule" id="PRU00280"/>
    </source>
</evidence>
<evidence type="ECO:0000303" key="4">
    <source>
    </source>
</evidence>
<evidence type="ECO:0000303" key="5">
    <source>
    </source>
</evidence>
<evidence type="ECO:0000305" key="6"/>
<evidence type="ECO:0000312" key="7">
    <source>
        <dbReference type="Araport" id="AT3G48970"/>
    </source>
</evidence>
<evidence type="ECO:0000312" key="8">
    <source>
        <dbReference type="EMBL" id="AAO41875.1"/>
    </source>
</evidence>
<evidence type="ECO:0000312" key="9">
    <source>
        <dbReference type="EMBL" id="CAB62013.1"/>
    </source>
</evidence>
<proteinExistence type="evidence at transcript level"/>
<sequence length="140" mass="15752">MSMTVEIRVPNLDCEGCASKLRKTLLKLKGVEEVEVEMETQKVTARGYRLEEKKVLKAVRRAGKAAELWPYRLGNSHFASFYKYPSYVTNHYYSDAHRTDPTGGVHTFFHTPADYSVAVAGDEIAASMFSDDNPHACTIM</sequence>
<dbReference type="EMBL" id="AL132967">
    <property type="protein sequence ID" value="CAB62013.1"/>
    <property type="status" value="ALT_SEQ"/>
    <property type="molecule type" value="Genomic_DNA"/>
</dbReference>
<dbReference type="EMBL" id="CP002686">
    <property type="protein sequence ID" value="AEE78478.1"/>
    <property type="molecule type" value="Genomic_DNA"/>
</dbReference>
<dbReference type="EMBL" id="BT003822">
    <property type="protein sequence ID" value="AAO41875.1"/>
    <property type="molecule type" value="mRNA"/>
</dbReference>
<dbReference type="EMBL" id="BT005126">
    <property type="protein sequence ID" value="AAO50659.1"/>
    <property type="molecule type" value="mRNA"/>
</dbReference>
<dbReference type="EMBL" id="AY086414">
    <property type="protein sequence ID" value="AAM63416.1"/>
    <property type="molecule type" value="mRNA"/>
</dbReference>
<dbReference type="PIR" id="T46133">
    <property type="entry name" value="T46133"/>
</dbReference>
<dbReference type="RefSeq" id="NP_001326960.1">
    <property type="nucleotide sequence ID" value="NM_001339390.1"/>
</dbReference>
<dbReference type="RefSeq" id="NP_001326961.1">
    <property type="nucleotide sequence ID" value="NM_001339391.1"/>
</dbReference>
<dbReference type="RefSeq" id="NP_566913.1">
    <property type="nucleotide sequence ID" value="NM_114756.3"/>
</dbReference>
<dbReference type="SMR" id="Q84K70"/>
<dbReference type="FunCoup" id="Q84K70">
    <property type="interactions" value="42"/>
</dbReference>
<dbReference type="STRING" id="3702.Q84K70"/>
<dbReference type="iPTMnet" id="Q84K70"/>
<dbReference type="PaxDb" id="3702-AT3G48970.1"/>
<dbReference type="EnsemblPlants" id="AT3G48970.1">
    <property type="protein sequence ID" value="AT3G48970.1"/>
    <property type="gene ID" value="AT3G48970"/>
</dbReference>
<dbReference type="GeneID" id="824058"/>
<dbReference type="Gramene" id="AT3G48970.1">
    <property type="protein sequence ID" value="AT3G48970.1"/>
    <property type="gene ID" value="AT3G48970"/>
</dbReference>
<dbReference type="KEGG" id="ath:AT3G48970"/>
<dbReference type="Araport" id="AT3G48970"/>
<dbReference type="TAIR" id="AT3G48970"/>
<dbReference type="eggNOG" id="KOG1603">
    <property type="taxonomic scope" value="Eukaryota"/>
</dbReference>
<dbReference type="HOGENOM" id="CLU_100095_1_1_1"/>
<dbReference type="InParanoid" id="Q84K70"/>
<dbReference type="OMA" id="MQKITVR"/>
<dbReference type="PhylomeDB" id="Q84K70"/>
<dbReference type="PRO" id="PR:Q84K70"/>
<dbReference type="Proteomes" id="UP000006548">
    <property type="component" value="Chromosome 3"/>
</dbReference>
<dbReference type="ExpressionAtlas" id="Q84K70">
    <property type="expression patterns" value="baseline and differential"/>
</dbReference>
<dbReference type="GO" id="GO:0046872">
    <property type="term" value="F:metal ion binding"/>
    <property type="evidence" value="ECO:0007669"/>
    <property type="project" value="UniProtKB-KW"/>
</dbReference>
<dbReference type="Gene3D" id="3.30.70.100">
    <property type="match status" value="1"/>
</dbReference>
<dbReference type="InterPro" id="IPR006121">
    <property type="entry name" value="HMA_dom"/>
</dbReference>
<dbReference type="InterPro" id="IPR036163">
    <property type="entry name" value="HMA_dom_sf"/>
</dbReference>
<dbReference type="PANTHER" id="PTHR22814">
    <property type="entry name" value="COPPER TRANSPORT PROTEIN ATOX1-RELATED"/>
    <property type="match status" value="1"/>
</dbReference>
<dbReference type="PANTHER" id="PTHR22814:SF319">
    <property type="entry name" value="HEAVY METAL-ASSOCIATED ISOPRENYLATED PLANT PROTEIN 31"/>
    <property type="match status" value="1"/>
</dbReference>
<dbReference type="Pfam" id="PF00403">
    <property type="entry name" value="HMA"/>
    <property type="match status" value="1"/>
</dbReference>
<dbReference type="SUPFAM" id="SSF55008">
    <property type="entry name" value="HMA, heavy metal-associated domain"/>
    <property type="match status" value="1"/>
</dbReference>
<dbReference type="PROSITE" id="PS50846">
    <property type="entry name" value="HMA_2"/>
    <property type="match status" value="1"/>
</dbReference>
<gene>
    <name evidence="4 5" type="primary">HIPP31</name>
    <name evidence="7" type="ordered locus">At3g48970</name>
    <name evidence="9" type="ORF">T2J13.190</name>
</gene>